<dbReference type="EMBL" id="AE016879">
    <property type="protein sequence ID" value="AAP28506.1"/>
    <property type="molecule type" value="Genomic_DNA"/>
</dbReference>
<dbReference type="EMBL" id="AE017334">
    <property type="protein sequence ID" value="AAT33938.1"/>
    <property type="molecule type" value="Genomic_DNA"/>
</dbReference>
<dbReference type="EMBL" id="AE017225">
    <property type="protein sequence ID" value="AAT56767.1"/>
    <property type="molecule type" value="Genomic_DNA"/>
</dbReference>
<dbReference type="RefSeq" id="NP_847020.1">
    <property type="nucleotide sequence ID" value="NC_003997.3"/>
</dbReference>
<dbReference type="RefSeq" id="WP_001138362.1">
    <property type="nucleotide sequence ID" value="NZ_WXXJ01000026.1"/>
</dbReference>
<dbReference type="RefSeq" id="YP_030716.1">
    <property type="nucleotide sequence ID" value="NC_005945.1"/>
</dbReference>
<dbReference type="SMR" id="Q81L17"/>
<dbReference type="STRING" id="261594.GBAA_4817"/>
<dbReference type="DNASU" id="1083953"/>
<dbReference type="GeneID" id="93006537"/>
<dbReference type="KEGG" id="ban:BA_4817"/>
<dbReference type="KEGG" id="bar:GBAA_4817"/>
<dbReference type="KEGG" id="bat:BAS4469"/>
<dbReference type="PATRIC" id="fig|198094.11.peg.4778"/>
<dbReference type="eggNOG" id="COG0292">
    <property type="taxonomic scope" value="Bacteria"/>
</dbReference>
<dbReference type="HOGENOM" id="CLU_123265_0_1_9"/>
<dbReference type="OMA" id="GRRKNVW"/>
<dbReference type="OrthoDB" id="9808966at2"/>
<dbReference type="Proteomes" id="UP000000427">
    <property type="component" value="Chromosome"/>
</dbReference>
<dbReference type="Proteomes" id="UP000000594">
    <property type="component" value="Chromosome"/>
</dbReference>
<dbReference type="GO" id="GO:1990904">
    <property type="term" value="C:ribonucleoprotein complex"/>
    <property type="evidence" value="ECO:0007669"/>
    <property type="project" value="UniProtKB-KW"/>
</dbReference>
<dbReference type="GO" id="GO:0005840">
    <property type="term" value="C:ribosome"/>
    <property type="evidence" value="ECO:0007669"/>
    <property type="project" value="UniProtKB-KW"/>
</dbReference>
<dbReference type="GO" id="GO:0019843">
    <property type="term" value="F:rRNA binding"/>
    <property type="evidence" value="ECO:0007669"/>
    <property type="project" value="UniProtKB-UniRule"/>
</dbReference>
<dbReference type="GO" id="GO:0003735">
    <property type="term" value="F:structural constituent of ribosome"/>
    <property type="evidence" value="ECO:0007669"/>
    <property type="project" value="InterPro"/>
</dbReference>
<dbReference type="GO" id="GO:0000027">
    <property type="term" value="P:ribosomal large subunit assembly"/>
    <property type="evidence" value="ECO:0007669"/>
    <property type="project" value="UniProtKB-UniRule"/>
</dbReference>
<dbReference type="GO" id="GO:0006412">
    <property type="term" value="P:translation"/>
    <property type="evidence" value="ECO:0007669"/>
    <property type="project" value="InterPro"/>
</dbReference>
<dbReference type="CDD" id="cd07026">
    <property type="entry name" value="Ribosomal_L20"/>
    <property type="match status" value="1"/>
</dbReference>
<dbReference type="FunFam" id="1.10.1900.20:FF:000001">
    <property type="entry name" value="50S ribosomal protein L20"/>
    <property type="match status" value="1"/>
</dbReference>
<dbReference type="Gene3D" id="6.10.160.10">
    <property type="match status" value="1"/>
</dbReference>
<dbReference type="Gene3D" id="1.10.1900.20">
    <property type="entry name" value="Ribosomal protein L20"/>
    <property type="match status" value="1"/>
</dbReference>
<dbReference type="HAMAP" id="MF_00382">
    <property type="entry name" value="Ribosomal_bL20"/>
    <property type="match status" value="1"/>
</dbReference>
<dbReference type="InterPro" id="IPR005813">
    <property type="entry name" value="Ribosomal_bL20"/>
</dbReference>
<dbReference type="InterPro" id="IPR049946">
    <property type="entry name" value="RIBOSOMAL_L20_CS"/>
</dbReference>
<dbReference type="InterPro" id="IPR035566">
    <property type="entry name" value="Ribosomal_protein_bL20_C"/>
</dbReference>
<dbReference type="NCBIfam" id="TIGR01032">
    <property type="entry name" value="rplT_bact"/>
    <property type="match status" value="1"/>
</dbReference>
<dbReference type="PANTHER" id="PTHR10986">
    <property type="entry name" value="39S RIBOSOMAL PROTEIN L20"/>
    <property type="match status" value="1"/>
</dbReference>
<dbReference type="Pfam" id="PF00453">
    <property type="entry name" value="Ribosomal_L20"/>
    <property type="match status" value="1"/>
</dbReference>
<dbReference type="PRINTS" id="PR00062">
    <property type="entry name" value="RIBOSOMALL20"/>
</dbReference>
<dbReference type="SUPFAM" id="SSF74731">
    <property type="entry name" value="Ribosomal protein L20"/>
    <property type="match status" value="1"/>
</dbReference>
<dbReference type="PROSITE" id="PS00937">
    <property type="entry name" value="RIBOSOMAL_L20"/>
    <property type="match status" value="1"/>
</dbReference>
<organism>
    <name type="scientific">Bacillus anthracis</name>
    <dbReference type="NCBI Taxonomy" id="1392"/>
    <lineage>
        <taxon>Bacteria</taxon>
        <taxon>Bacillati</taxon>
        <taxon>Bacillota</taxon>
        <taxon>Bacilli</taxon>
        <taxon>Bacillales</taxon>
        <taxon>Bacillaceae</taxon>
        <taxon>Bacillus</taxon>
        <taxon>Bacillus cereus group</taxon>
    </lineage>
</organism>
<evidence type="ECO:0000255" key="1">
    <source>
        <dbReference type="HAMAP-Rule" id="MF_00382"/>
    </source>
</evidence>
<evidence type="ECO:0000305" key="2"/>
<gene>
    <name evidence="1" type="primary">rplT</name>
    <name type="ordered locus">BA_4817</name>
    <name type="ordered locus">GBAA_4817</name>
    <name type="ordered locus">BAS4469</name>
</gene>
<proteinExistence type="inferred from homology"/>
<comment type="function">
    <text evidence="1">Binds directly to 23S ribosomal RNA and is necessary for the in vitro assembly process of the 50S ribosomal subunit. It is not involved in the protein synthesizing functions of that subunit.</text>
</comment>
<comment type="similarity">
    <text evidence="1">Belongs to the bacterial ribosomal protein bL20 family.</text>
</comment>
<reference key="1">
    <citation type="journal article" date="2003" name="Nature">
        <title>The genome sequence of Bacillus anthracis Ames and comparison to closely related bacteria.</title>
        <authorList>
            <person name="Read T.D."/>
            <person name="Peterson S.N."/>
            <person name="Tourasse N.J."/>
            <person name="Baillie L.W."/>
            <person name="Paulsen I.T."/>
            <person name="Nelson K.E."/>
            <person name="Tettelin H."/>
            <person name="Fouts D.E."/>
            <person name="Eisen J.A."/>
            <person name="Gill S.R."/>
            <person name="Holtzapple E.K."/>
            <person name="Okstad O.A."/>
            <person name="Helgason E."/>
            <person name="Rilstone J."/>
            <person name="Wu M."/>
            <person name="Kolonay J.F."/>
            <person name="Beanan M.J."/>
            <person name="Dodson R.J."/>
            <person name="Brinkac L.M."/>
            <person name="Gwinn M.L."/>
            <person name="DeBoy R.T."/>
            <person name="Madpu R."/>
            <person name="Daugherty S.C."/>
            <person name="Durkin A.S."/>
            <person name="Haft D.H."/>
            <person name="Nelson W.C."/>
            <person name="Peterson J.D."/>
            <person name="Pop M."/>
            <person name="Khouri H.M."/>
            <person name="Radune D."/>
            <person name="Benton J.L."/>
            <person name="Mahamoud Y."/>
            <person name="Jiang L."/>
            <person name="Hance I.R."/>
            <person name="Weidman J.F."/>
            <person name="Berry K.J."/>
            <person name="Plaut R.D."/>
            <person name="Wolf A.M."/>
            <person name="Watkins K.L."/>
            <person name="Nierman W.C."/>
            <person name="Hazen A."/>
            <person name="Cline R.T."/>
            <person name="Redmond C."/>
            <person name="Thwaite J.E."/>
            <person name="White O."/>
            <person name="Salzberg S.L."/>
            <person name="Thomason B."/>
            <person name="Friedlander A.M."/>
            <person name="Koehler T.M."/>
            <person name="Hanna P.C."/>
            <person name="Kolstoe A.-B."/>
            <person name="Fraser C.M."/>
        </authorList>
    </citation>
    <scope>NUCLEOTIDE SEQUENCE [LARGE SCALE GENOMIC DNA]</scope>
    <source>
        <strain>Ames / isolate Porton</strain>
    </source>
</reference>
<reference key="2">
    <citation type="journal article" date="2009" name="J. Bacteriol.">
        <title>The complete genome sequence of Bacillus anthracis Ames 'Ancestor'.</title>
        <authorList>
            <person name="Ravel J."/>
            <person name="Jiang L."/>
            <person name="Stanley S.T."/>
            <person name="Wilson M.R."/>
            <person name="Decker R.S."/>
            <person name="Read T.D."/>
            <person name="Worsham P."/>
            <person name="Keim P.S."/>
            <person name="Salzberg S.L."/>
            <person name="Fraser-Liggett C.M."/>
            <person name="Rasko D.A."/>
        </authorList>
    </citation>
    <scope>NUCLEOTIDE SEQUENCE [LARGE SCALE GENOMIC DNA]</scope>
    <source>
        <strain>Ames ancestor</strain>
    </source>
</reference>
<reference key="3">
    <citation type="submission" date="2004-01" db="EMBL/GenBank/DDBJ databases">
        <title>Complete genome sequence of Bacillus anthracis Sterne.</title>
        <authorList>
            <person name="Brettin T.S."/>
            <person name="Bruce D."/>
            <person name="Challacombe J.F."/>
            <person name="Gilna P."/>
            <person name="Han C."/>
            <person name="Hill K."/>
            <person name="Hitchcock P."/>
            <person name="Jackson P."/>
            <person name="Keim P."/>
            <person name="Longmire J."/>
            <person name="Lucas S."/>
            <person name="Okinaka R."/>
            <person name="Richardson P."/>
            <person name="Rubin E."/>
            <person name="Tice H."/>
        </authorList>
    </citation>
    <scope>NUCLEOTIDE SEQUENCE [LARGE SCALE GENOMIC DNA]</scope>
    <source>
        <strain>Sterne</strain>
    </source>
</reference>
<keyword id="KW-1185">Reference proteome</keyword>
<keyword id="KW-0687">Ribonucleoprotein</keyword>
<keyword id="KW-0689">Ribosomal protein</keyword>
<keyword id="KW-0694">RNA-binding</keyword>
<keyword id="KW-0699">rRNA-binding</keyword>
<sequence length="118" mass="13612">MPRVKGGTVTRQRRKKVIKLAKGYYGSKNTLFKVANQQVMKSLMYAFRDRRQKKRDFRKLWITRINAAARMNGLSYSRLMHGLKNAGIEVNRKMLADLAVHDEKAFAELATVAKNNIN</sequence>
<name>RL20_BACAN</name>
<protein>
    <recommendedName>
        <fullName evidence="1">Large ribosomal subunit protein bL20</fullName>
    </recommendedName>
    <alternativeName>
        <fullName evidence="2">50S ribosomal protein L20</fullName>
    </alternativeName>
</protein>
<feature type="chain" id="PRO_0000177111" description="Large ribosomal subunit protein bL20">
    <location>
        <begin position="1"/>
        <end position="118"/>
    </location>
</feature>
<accession>Q81L17</accession>
<accession>Q6HSH2</accession>
<accession>Q6KLR7</accession>